<organism>
    <name type="scientific">Rickettsia typhi (strain ATCC VR-144 / Wilmington)</name>
    <dbReference type="NCBI Taxonomy" id="257363"/>
    <lineage>
        <taxon>Bacteria</taxon>
        <taxon>Pseudomonadati</taxon>
        <taxon>Pseudomonadota</taxon>
        <taxon>Alphaproteobacteria</taxon>
        <taxon>Rickettsiales</taxon>
        <taxon>Rickettsiaceae</taxon>
        <taxon>Rickettsieae</taxon>
        <taxon>Rickettsia</taxon>
        <taxon>typhus group</taxon>
    </lineage>
</organism>
<gene>
    <name type="ordered locus">RT0603</name>
</gene>
<reference key="1">
    <citation type="journal article" date="2004" name="J. Bacteriol.">
        <title>Complete genome sequence of Rickettsia typhi and comparison with sequences of other Rickettsiae.</title>
        <authorList>
            <person name="McLeod M.P."/>
            <person name="Qin X."/>
            <person name="Karpathy S.E."/>
            <person name="Gioia J."/>
            <person name="Highlander S.K."/>
            <person name="Fox G.E."/>
            <person name="McNeill T.Z."/>
            <person name="Jiang H."/>
            <person name="Muzny D."/>
            <person name="Jacob L.S."/>
            <person name="Hawes A.C."/>
            <person name="Sodergren E."/>
            <person name="Gill R."/>
            <person name="Hume J."/>
            <person name="Morgan M."/>
            <person name="Fan G."/>
            <person name="Amin A.G."/>
            <person name="Gibbs R.A."/>
            <person name="Hong C."/>
            <person name="Yu X.-J."/>
            <person name="Walker D.H."/>
            <person name="Weinstock G.M."/>
        </authorList>
    </citation>
    <scope>NUCLEOTIDE SEQUENCE [LARGE SCALE GENOMIC DNA]</scope>
    <source>
        <strain>ATCC VR-144 / Wilmington</strain>
    </source>
</reference>
<sequence length="599" mass="67324">MLSYLKQNLCFYLSSKILILALAISAIVSACTTFYVISLEAKNFSTIIGFLLIDLAIFLILGILLTQKFFSKNNDNDSSRLQNRIVIAFSLVAAIPTIIVSVFSVYFFNLSVKAWFDKKISTVLDQSVIVAETYIAEHKVQLKETALAVAEDLSDMYYDLIHNPALFTKTLNTEADMRSLDEAIVLNKSTNTIVANSYLSFSLSFATIPAHLIKKADLGEPVEVKSDPTKIRMLIKLKEYNDVYLLVGRLVDNKIIDHIDATNGAAAEYNSLKNEIDNIQIKFSIMFIFIALLLLFVAINFGVLFTAQIVKPIKKLVTATDKVKDGDLTVQVPENEVDKDEIGTLYVAFNRMIKQLSRQQRDLVIAQRAMAWSDVAKKVAHEIKNPLTPILLASERLLKKFSAEIKDKSEFESYLKMIIRHTNDIKNIVSEFVLFARLPAPKFTKSELVYLVKHIIEARKLLNDNIVYTCDSNVDQFDFMCDATQINQVMINVLKNAEESIEGQEFGRIDVILDIKDDFINVIVMDNGKGFPPELIGKATESYVTTSSKGMGVGLAIVKRIVEEHCGVLDIANREDKGAIIDIKFDLKELHLKVRRSCG</sequence>
<comment type="function">
    <text evidence="1">Member of the two-component regulatory system RT0603/RT0550.</text>
</comment>
<comment type="catalytic activity">
    <reaction>
        <text>ATP + protein L-histidine = ADP + protein N-phospho-L-histidine.</text>
        <dbReference type="EC" id="2.7.13.3"/>
    </reaction>
</comment>
<comment type="subcellular location">
    <subcellularLocation>
        <location evidence="5">Cell membrane</location>
        <topology evidence="5">Multi-pass membrane protein</topology>
    </subcellularLocation>
</comment>
<comment type="sequence caution" evidence="5">
    <conflict type="erroneous initiation">
        <sequence resource="EMBL-CDS" id="AAU04067"/>
    </conflict>
</comment>
<feature type="chain" id="PRO_0000282376" description="Putative sensor histidine kinase NtrY-like">
    <location>
        <begin position="1"/>
        <end position="599"/>
    </location>
</feature>
<feature type="transmembrane region" description="Helical" evidence="2">
    <location>
        <begin position="17"/>
        <end position="37"/>
    </location>
</feature>
<feature type="transmembrane region" description="Helical" evidence="2">
    <location>
        <begin position="44"/>
        <end position="64"/>
    </location>
</feature>
<feature type="transmembrane region" description="Helical" evidence="2">
    <location>
        <begin position="85"/>
        <end position="105"/>
    </location>
</feature>
<feature type="transmembrane region" description="Helical" evidence="2">
    <location>
        <begin position="285"/>
        <end position="305"/>
    </location>
</feature>
<feature type="domain" description="HAMP" evidence="3">
    <location>
        <begin position="307"/>
        <end position="361"/>
    </location>
</feature>
<feature type="domain" description="Histidine kinase" evidence="4">
    <location>
        <begin position="378"/>
        <end position="589"/>
    </location>
</feature>
<feature type="modified residue" description="Phosphohistidine; by autocatalysis" evidence="4">
    <location>
        <position position="381"/>
    </location>
</feature>
<accession>Q68WC5</accession>
<proteinExistence type="inferred from homology"/>
<evidence type="ECO:0000250" key="1"/>
<evidence type="ECO:0000255" key="2"/>
<evidence type="ECO:0000255" key="3">
    <source>
        <dbReference type="PROSITE-ProRule" id="PRU00102"/>
    </source>
</evidence>
<evidence type="ECO:0000255" key="4">
    <source>
        <dbReference type="PROSITE-ProRule" id="PRU00107"/>
    </source>
</evidence>
<evidence type="ECO:0000305" key="5"/>
<protein>
    <recommendedName>
        <fullName>Putative sensor histidine kinase NtrY-like</fullName>
        <ecNumber>2.7.13.3</ecNumber>
    </recommendedName>
</protein>
<name>NTRYL_RICTY</name>
<dbReference type="EC" id="2.7.13.3"/>
<dbReference type="EMBL" id="AE017197">
    <property type="protein sequence ID" value="AAU04067.1"/>
    <property type="status" value="ALT_INIT"/>
    <property type="molecule type" value="Genomic_DNA"/>
</dbReference>
<dbReference type="RefSeq" id="WP_014419450.1">
    <property type="nucleotide sequence ID" value="NC_006142.1"/>
</dbReference>
<dbReference type="SMR" id="Q68WC5"/>
<dbReference type="KEGG" id="rty:RT0603"/>
<dbReference type="eggNOG" id="COG5000">
    <property type="taxonomic scope" value="Bacteria"/>
</dbReference>
<dbReference type="HOGENOM" id="CLU_019564_1_0_5"/>
<dbReference type="OrthoDB" id="9776727at2"/>
<dbReference type="Proteomes" id="UP000000604">
    <property type="component" value="Chromosome"/>
</dbReference>
<dbReference type="GO" id="GO:0005886">
    <property type="term" value="C:plasma membrane"/>
    <property type="evidence" value="ECO:0007669"/>
    <property type="project" value="UniProtKB-SubCell"/>
</dbReference>
<dbReference type="GO" id="GO:0005524">
    <property type="term" value="F:ATP binding"/>
    <property type="evidence" value="ECO:0007669"/>
    <property type="project" value="UniProtKB-KW"/>
</dbReference>
<dbReference type="GO" id="GO:0000155">
    <property type="term" value="F:phosphorelay sensor kinase activity"/>
    <property type="evidence" value="ECO:0007669"/>
    <property type="project" value="InterPro"/>
</dbReference>
<dbReference type="CDD" id="cd06225">
    <property type="entry name" value="HAMP"/>
    <property type="match status" value="1"/>
</dbReference>
<dbReference type="CDD" id="cd00082">
    <property type="entry name" value="HisKA"/>
    <property type="match status" value="1"/>
</dbReference>
<dbReference type="Gene3D" id="1.10.287.130">
    <property type="match status" value="1"/>
</dbReference>
<dbReference type="Gene3D" id="6.10.340.10">
    <property type="match status" value="1"/>
</dbReference>
<dbReference type="Gene3D" id="3.30.565.10">
    <property type="entry name" value="Histidine kinase-like ATPase, C-terminal domain"/>
    <property type="match status" value="1"/>
</dbReference>
<dbReference type="InterPro" id="IPR050398">
    <property type="entry name" value="Bact_Sensor_His_Kinase"/>
</dbReference>
<dbReference type="InterPro" id="IPR003660">
    <property type="entry name" value="HAMP_dom"/>
</dbReference>
<dbReference type="InterPro" id="IPR036890">
    <property type="entry name" value="HATPase_C_sf"/>
</dbReference>
<dbReference type="InterPro" id="IPR005467">
    <property type="entry name" value="His_kinase_dom"/>
</dbReference>
<dbReference type="InterPro" id="IPR003661">
    <property type="entry name" value="HisK_dim/P_dom"/>
</dbReference>
<dbReference type="InterPro" id="IPR036097">
    <property type="entry name" value="HisK_dim/P_sf"/>
</dbReference>
<dbReference type="InterPro" id="IPR045671">
    <property type="entry name" value="NtrY-like_N"/>
</dbReference>
<dbReference type="InterPro" id="IPR004358">
    <property type="entry name" value="Sig_transdc_His_kin-like_C"/>
</dbReference>
<dbReference type="PANTHER" id="PTHR45528">
    <property type="entry name" value="SENSOR HISTIDINE KINASE CPXA"/>
    <property type="match status" value="1"/>
</dbReference>
<dbReference type="PANTHER" id="PTHR45528:SF1">
    <property type="entry name" value="SENSOR HISTIDINE KINASE CPXA"/>
    <property type="match status" value="1"/>
</dbReference>
<dbReference type="Pfam" id="PF00672">
    <property type="entry name" value="HAMP"/>
    <property type="match status" value="1"/>
</dbReference>
<dbReference type="Pfam" id="PF02518">
    <property type="entry name" value="HATPase_c"/>
    <property type="match status" value="1"/>
</dbReference>
<dbReference type="Pfam" id="PF00512">
    <property type="entry name" value="HisKA"/>
    <property type="match status" value="1"/>
</dbReference>
<dbReference type="Pfam" id="PF19312">
    <property type="entry name" value="NtrY_N"/>
    <property type="match status" value="1"/>
</dbReference>
<dbReference type="PRINTS" id="PR00344">
    <property type="entry name" value="BCTRLSENSOR"/>
</dbReference>
<dbReference type="SMART" id="SM00304">
    <property type="entry name" value="HAMP"/>
    <property type="match status" value="1"/>
</dbReference>
<dbReference type="SMART" id="SM00387">
    <property type="entry name" value="HATPase_c"/>
    <property type="match status" value="1"/>
</dbReference>
<dbReference type="SMART" id="SM00388">
    <property type="entry name" value="HisKA"/>
    <property type="match status" value="1"/>
</dbReference>
<dbReference type="SUPFAM" id="SSF55874">
    <property type="entry name" value="ATPase domain of HSP90 chaperone/DNA topoisomerase II/histidine kinase"/>
    <property type="match status" value="1"/>
</dbReference>
<dbReference type="SUPFAM" id="SSF158472">
    <property type="entry name" value="HAMP domain-like"/>
    <property type="match status" value="1"/>
</dbReference>
<dbReference type="SUPFAM" id="SSF47384">
    <property type="entry name" value="Homodimeric domain of signal transducing histidine kinase"/>
    <property type="match status" value="1"/>
</dbReference>
<dbReference type="PROSITE" id="PS50885">
    <property type="entry name" value="HAMP"/>
    <property type="match status" value="1"/>
</dbReference>
<dbReference type="PROSITE" id="PS50109">
    <property type="entry name" value="HIS_KIN"/>
    <property type="match status" value="1"/>
</dbReference>
<keyword id="KW-0067">ATP-binding</keyword>
<keyword id="KW-1003">Cell membrane</keyword>
<keyword id="KW-0418">Kinase</keyword>
<keyword id="KW-0472">Membrane</keyword>
<keyword id="KW-0547">Nucleotide-binding</keyword>
<keyword id="KW-0597">Phosphoprotein</keyword>
<keyword id="KW-0808">Transferase</keyword>
<keyword id="KW-0812">Transmembrane</keyword>
<keyword id="KW-1133">Transmembrane helix</keyword>
<keyword id="KW-0902">Two-component regulatory system</keyword>